<protein>
    <recommendedName>
        <fullName evidence="8">Two-component response regulator ORR12</fullName>
    </recommendedName>
    <alternativeName>
        <fullName evidence="6">OsRR12</fullName>
    </alternativeName>
    <alternativeName>
        <fullName evidence="5">OsRRA11</fullName>
    </alternativeName>
</protein>
<keyword id="KW-0932">Cytokinin signaling pathway</keyword>
<keyword id="KW-0597">Phosphoprotein</keyword>
<keyword id="KW-1185">Reference proteome</keyword>
<keyword id="KW-0804">Transcription</keyword>
<keyword id="KW-0805">Transcription regulation</keyword>
<keyword id="KW-0902">Two-component regulatory system</keyword>
<evidence type="ECO:0000250" key="1">
    <source>
        <dbReference type="UniProtKB" id="Q9ZWS9"/>
    </source>
</evidence>
<evidence type="ECO:0000255" key="2">
    <source>
        <dbReference type="PROSITE-ProRule" id="PRU00169"/>
    </source>
</evidence>
<evidence type="ECO:0000269" key="3">
    <source>
    </source>
</evidence>
<evidence type="ECO:0000269" key="4">
    <source>
    </source>
</evidence>
<evidence type="ECO:0000303" key="5">
    <source>
    </source>
</evidence>
<evidence type="ECO:0000303" key="6">
    <source>
    </source>
</evidence>
<evidence type="ECO:0000303" key="7">
    <source>
    </source>
</evidence>
<evidence type="ECO:0000305" key="8"/>
<evidence type="ECO:0000312" key="9">
    <source>
        <dbReference type="EMBL" id="AP008214"/>
    </source>
</evidence>
<evidence type="ECO:0000312" key="10">
    <source>
        <dbReference type="EMBL" id="BAC45103.1"/>
    </source>
</evidence>
<evidence type="ECO:0000312" key="11">
    <source>
        <dbReference type="EMBL" id="EAZ42557.1"/>
    </source>
</evidence>
<comment type="function">
    <text evidence="1">Functions as a response regulator involved in His-to-Asp phosphorelay signal transduction system. Phosphorylation of the Asp residue in the receiver domain activates the ability of the protein to promote the transcription of target genes. Type-A response regulators seem to act as negative regulators of the cytokinin signaling.</text>
</comment>
<comment type="tissue specificity">
    <text evidence="4">Expressed in flowers and panicles.</text>
</comment>
<comment type="PTM">
    <text evidence="8">Two-component system major event consists of a His-to-Asp phosphorelay between a sensor histidine kinase (HK) and a response regulator (RR). In plants, the His-to-Asp phosphorelay involves an additional intermediate named Histidine-containing phosphotransfer protein (HPt). This multistep phosphorelay consists of a His-Asp-His-Asp sequential transfer of a phosphate group between first a His and an Asp of the HK protein, followed by the transfer to a conserved His of the HPt protein and finally the transfer to an Asp in the receiver domain of the RR protein.</text>
</comment>
<comment type="disruption phenotype">
    <text evidence="3">Dwarf, narrow leaf and low tillering phenotypes.</text>
</comment>
<comment type="similarity">
    <text evidence="8">Belongs to the ARR family. Type-A subfamily.</text>
</comment>
<comment type="sequence caution" evidence="8">
    <conflict type="erroneous gene model prediction">
        <sequence resource="EMBL-CDS" id="BAC45103"/>
    </conflict>
</comment>
<comment type="sequence caution" evidence="8">
    <conflict type="erroneous gene model prediction">
        <sequence resource="EMBL-CDS" id="EAZ42557"/>
    </conflict>
</comment>
<reference key="1">
    <citation type="journal article" date="2006" name="Gene">
        <title>Identification and characterization of cytokinin-signalling gene families in rice.</title>
        <authorList>
            <person name="Ito Y."/>
            <person name="Kurata N."/>
        </authorList>
    </citation>
    <scope>NUCLEOTIDE SEQUENCE [GENOMIC DNA]</scope>
    <scope>TISSUE SPECIFICITY</scope>
    <source>
        <strain>cv. Nipponbare</strain>
    </source>
</reference>
<reference key="2">
    <citation type="journal article" date="2007" name="Plant Cell Physiol.">
        <title>Overexpression of a type-A response regulator alters rice morphology and cytokinin metabolism.</title>
        <authorList>
            <person name="Hirose N."/>
            <person name="Makita N."/>
            <person name="Kojima M."/>
            <person name="Kamada-Nobusada T."/>
            <person name="Sakakibara H."/>
        </authorList>
    </citation>
    <scope>NUCLEOTIDE SEQUENCE [MRNA]</scope>
    <source>
        <strain>cv. Nipponbare</strain>
    </source>
</reference>
<reference key="3">
    <citation type="journal article" date="2005" name="Nature">
        <title>The map-based sequence of the rice genome.</title>
        <authorList>
            <consortium name="International rice genome sequencing project (IRGSP)"/>
        </authorList>
    </citation>
    <scope>NUCLEOTIDE SEQUENCE [LARGE SCALE GENOMIC DNA]</scope>
    <source>
        <strain>cv. Nipponbare</strain>
    </source>
</reference>
<reference key="4">
    <citation type="journal article" date="2008" name="Nucleic Acids Res.">
        <title>The rice annotation project database (RAP-DB): 2008 update.</title>
        <authorList>
            <consortium name="The rice annotation project (RAP)"/>
        </authorList>
    </citation>
    <scope>GENOME REANNOTATION</scope>
    <source>
        <strain>cv. Nipponbare</strain>
    </source>
</reference>
<reference key="5">
    <citation type="journal article" date="2013" name="Rice">
        <title>Improvement of the Oryza sativa Nipponbare reference genome using next generation sequence and optical map data.</title>
        <authorList>
            <person name="Kawahara Y."/>
            <person name="de la Bastide M."/>
            <person name="Hamilton J.P."/>
            <person name="Kanamori H."/>
            <person name="McCombie W.R."/>
            <person name="Ouyang S."/>
            <person name="Schwartz D.C."/>
            <person name="Tanaka T."/>
            <person name="Wu J."/>
            <person name="Zhou S."/>
            <person name="Childs K.L."/>
            <person name="Davidson R.M."/>
            <person name="Lin H."/>
            <person name="Quesada-Ocampo L."/>
            <person name="Vaillancourt B."/>
            <person name="Sakai H."/>
            <person name="Lee S.S."/>
            <person name="Kim J."/>
            <person name="Numa H."/>
            <person name="Itoh T."/>
            <person name="Buell C.R."/>
            <person name="Matsumoto T."/>
        </authorList>
    </citation>
    <scope>GENOME REANNOTATION</scope>
    <source>
        <strain>cv. Nipponbare</strain>
    </source>
</reference>
<reference key="6">
    <citation type="journal article" date="2005" name="PLoS Biol.">
        <title>The genomes of Oryza sativa: a history of duplications.</title>
        <authorList>
            <person name="Yu J."/>
            <person name="Wang J."/>
            <person name="Lin W."/>
            <person name="Li S."/>
            <person name="Li H."/>
            <person name="Zhou J."/>
            <person name="Ni P."/>
            <person name="Dong W."/>
            <person name="Hu S."/>
            <person name="Zeng C."/>
            <person name="Zhang J."/>
            <person name="Zhang Y."/>
            <person name="Li R."/>
            <person name="Xu Z."/>
            <person name="Li S."/>
            <person name="Li X."/>
            <person name="Zheng H."/>
            <person name="Cong L."/>
            <person name="Lin L."/>
            <person name="Yin J."/>
            <person name="Geng J."/>
            <person name="Li G."/>
            <person name="Shi J."/>
            <person name="Liu J."/>
            <person name="Lv H."/>
            <person name="Li J."/>
            <person name="Wang J."/>
            <person name="Deng Y."/>
            <person name="Ran L."/>
            <person name="Shi X."/>
            <person name="Wang X."/>
            <person name="Wu Q."/>
            <person name="Li C."/>
            <person name="Ren X."/>
            <person name="Wang J."/>
            <person name="Wang X."/>
            <person name="Li D."/>
            <person name="Liu D."/>
            <person name="Zhang X."/>
            <person name="Ji Z."/>
            <person name="Zhao W."/>
            <person name="Sun Y."/>
            <person name="Zhang Z."/>
            <person name="Bao J."/>
            <person name="Han Y."/>
            <person name="Dong L."/>
            <person name="Ji J."/>
            <person name="Chen P."/>
            <person name="Wu S."/>
            <person name="Liu J."/>
            <person name="Xiao Y."/>
            <person name="Bu D."/>
            <person name="Tan J."/>
            <person name="Yang L."/>
            <person name="Ye C."/>
            <person name="Zhang J."/>
            <person name="Xu J."/>
            <person name="Zhou Y."/>
            <person name="Yu Y."/>
            <person name="Zhang B."/>
            <person name="Zhuang S."/>
            <person name="Wei H."/>
            <person name="Liu B."/>
            <person name="Lei M."/>
            <person name="Yu H."/>
            <person name="Li Y."/>
            <person name="Xu H."/>
            <person name="Wei S."/>
            <person name="He X."/>
            <person name="Fang L."/>
            <person name="Zhang Z."/>
            <person name="Zhang Y."/>
            <person name="Huang X."/>
            <person name="Su Z."/>
            <person name="Tong W."/>
            <person name="Li J."/>
            <person name="Tong Z."/>
            <person name="Li S."/>
            <person name="Ye J."/>
            <person name="Wang L."/>
            <person name="Fang L."/>
            <person name="Lei T."/>
            <person name="Chen C.-S."/>
            <person name="Chen H.-C."/>
            <person name="Xu Z."/>
            <person name="Li H."/>
            <person name="Huang H."/>
            <person name="Zhang F."/>
            <person name="Xu H."/>
            <person name="Li N."/>
            <person name="Zhao C."/>
            <person name="Li S."/>
            <person name="Dong L."/>
            <person name="Huang Y."/>
            <person name="Li L."/>
            <person name="Xi Y."/>
            <person name="Qi Q."/>
            <person name="Li W."/>
            <person name="Zhang B."/>
            <person name="Hu W."/>
            <person name="Zhang Y."/>
            <person name="Tian X."/>
            <person name="Jiao Y."/>
            <person name="Liang X."/>
            <person name="Jin J."/>
            <person name="Gao L."/>
            <person name="Zheng W."/>
            <person name="Hao B."/>
            <person name="Liu S.-M."/>
            <person name="Wang W."/>
            <person name="Yuan L."/>
            <person name="Cao M."/>
            <person name="McDermott J."/>
            <person name="Samudrala R."/>
            <person name="Wang J."/>
            <person name="Wong G.K.-S."/>
            <person name="Yang H."/>
        </authorList>
    </citation>
    <scope>NUCLEOTIDE SEQUENCE [LARGE SCALE GENOMIC DNA]</scope>
    <source>
        <strain>cv. Nipponbare</strain>
    </source>
</reference>
<reference key="7">
    <citation type="journal article" date="2006" name="Plant Physiol.">
        <title>Whole-genome analysis of Oryza sativa reveals similar architecture of two-component signaling machinery with Arabidopsis.</title>
        <authorList>
            <person name="Pareek A."/>
            <person name="Singh A."/>
            <person name="Kumar M."/>
            <person name="Kushwaha H.R."/>
            <person name="Lynn A.M."/>
            <person name="Singla-Pareek S.L."/>
        </authorList>
    </citation>
    <scope>DISRUPTION PHENOTYPE</scope>
</reference>
<reference key="8">
    <citation type="journal article" date="2007" name="Plant Physiol.">
        <title>Nomenclature for two-component signaling elements of rice.</title>
        <authorList>
            <person name="Schaller G.E."/>
            <person name="Doi K."/>
            <person name="Hwang I."/>
            <person name="Kieber J.J."/>
            <person name="Khurana J.P."/>
            <person name="Kurata N."/>
            <person name="Mizuno T."/>
            <person name="Pareek A."/>
            <person name="Shiu S.H."/>
            <person name="Wu P."/>
            <person name="Yip W.K."/>
        </authorList>
    </citation>
    <scope>GENE FAMILY</scope>
    <scope>NOMENCLATURE</scope>
</reference>
<name>ORR12_ORYSJ</name>
<gene>
    <name evidence="7" type="primary">RR12</name>
    <name evidence="9" type="ordered locus">Os08g0377200</name>
    <name evidence="8" type="ordered locus">LOC_Os08g28950</name>
    <name evidence="10" type="ORF">OJ1705_C03.124</name>
    <name evidence="11" type="ORF">OsJ_27123</name>
</gene>
<proteinExistence type="evidence at transcript level"/>
<feature type="chain" id="PRO_0000433838" description="Two-component response regulator ORR12">
    <location>
        <begin position="1"/>
        <end position="121"/>
    </location>
</feature>
<feature type="domain" description="Response regulatory" evidence="2">
    <location>
        <begin position="5"/>
        <end position="121"/>
    </location>
</feature>
<feature type="modified residue" description="4-aspartylphosphate" evidence="2">
    <location>
        <position position="55"/>
    </location>
</feature>
<organism>
    <name type="scientific">Oryza sativa subsp. japonica</name>
    <name type="common">Rice</name>
    <dbReference type="NCBI Taxonomy" id="39947"/>
    <lineage>
        <taxon>Eukaryota</taxon>
        <taxon>Viridiplantae</taxon>
        <taxon>Streptophyta</taxon>
        <taxon>Embryophyta</taxon>
        <taxon>Tracheophyta</taxon>
        <taxon>Spermatophyta</taxon>
        <taxon>Magnoliopsida</taxon>
        <taxon>Liliopsida</taxon>
        <taxon>Poales</taxon>
        <taxon>Poaceae</taxon>
        <taxon>BOP clade</taxon>
        <taxon>Oryzoideae</taxon>
        <taxon>Oryzeae</taxon>
        <taxon>Oryzinae</taxon>
        <taxon>Oryza</taxon>
        <taxon>Oryza sativa</taxon>
    </lineage>
</organism>
<sequence length="121" mass="13633">MSSPHVLVVDDTLVDRHVVSMALMRHNVRVTAVESVMQALMFLDSEHDVNMIVSDYCMPDMTGYDLLMEVKKSPKLAHLPVVIASSDNIPERIRKCLDGGAKDYILKPVKIVDLPRILNYI</sequence>
<accession>Q2HWG1</accession>
<accession>A0A0P0XF27</accession>
<accession>Q8GVV1</accession>
<dbReference type="EMBL" id="BR000319">
    <property type="protein sequence ID" value="FAA00271.1"/>
    <property type="molecule type" value="Genomic_DNA"/>
</dbReference>
<dbReference type="EMBL" id="AB249664">
    <property type="protein sequence ID" value="BAE79358.1"/>
    <property type="molecule type" value="mRNA"/>
</dbReference>
<dbReference type="EMBL" id="AP003962">
    <property type="protein sequence ID" value="BAC45103.1"/>
    <property type="status" value="ALT_SEQ"/>
    <property type="molecule type" value="Genomic_DNA"/>
</dbReference>
<dbReference type="EMBL" id="AP008214">
    <property type="status" value="NOT_ANNOTATED_CDS"/>
    <property type="molecule type" value="Genomic_DNA"/>
</dbReference>
<dbReference type="EMBL" id="AP014964">
    <property type="protein sequence ID" value="BAT05204.1"/>
    <property type="molecule type" value="Genomic_DNA"/>
</dbReference>
<dbReference type="EMBL" id="CM000145">
    <property type="protein sequence ID" value="EAZ42557.1"/>
    <property type="status" value="ALT_SEQ"/>
    <property type="molecule type" value="Genomic_DNA"/>
</dbReference>
<dbReference type="SMR" id="Q2HWG1"/>
<dbReference type="FunCoup" id="Q2HWG1">
    <property type="interactions" value="28"/>
</dbReference>
<dbReference type="STRING" id="39947.Q2HWG1"/>
<dbReference type="PaxDb" id="39947-Q2HWG1"/>
<dbReference type="EnsemblPlants" id="Os08t0377200-01">
    <property type="protein sequence ID" value="Os08t0377200-01"/>
    <property type="gene ID" value="Os08g0377200"/>
</dbReference>
<dbReference type="GeneID" id="107275331"/>
<dbReference type="Gramene" id="Os08t0377200-01">
    <property type="protein sequence ID" value="Os08t0377200-01"/>
    <property type="gene ID" value="Os08g0377200"/>
</dbReference>
<dbReference type="KEGG" id="osa:107275331"/>
<dbReference type="eggNOG" id="KOG1601">
    <property type="taxonomic scope" value="Eukaryota"/>
</dbReference>
<dbReference type="HOGENOM" id="CLU_000445_69_5_1"/>
<dbReference type="InParanoid" id="Q2HWG1"/>
<dbReference type="OMA" id="TCTEDIP"/>
<dbReference type="OrthoDB" id="599780at2759"/>
<dbReference type="Proteomes" id="UP000000763">
    <property type="component" value="Chromosome 8"/>
</dbReference>
<dbReference type="Proteomes" id="UP000007752">
    <property type="component" value="Chromosome 8"/>
</dbReference>
<dbReference type="Proteomes" id="UP000059680">
    <property type="component" value="Chromosome 8"/>
</dbReference>
<dbReference type="GO" id="GO:0009736">
    <property type="term" value="P:cytokinin-activated signaling pathway"/>
    <property type="evidence" value="ECO:0007669"/>
    <property type="project" value="UniProtKB-KW"/>
</dbReference>
<dbReference type="GO" id="GO:0000160">
    <property type="term" value="P:phosphorelay signal transduction system"/>
    <property type="evidence" value="ECO:0007669"/>
    <property type="project" value="UniProtKB-KW"/>
</dbReference>
<dbReference type="Gene3D" id="3.40.50.2300">
    <property type="match status" value="1"/>
</dbReference>
<dbReference type="InterPro" id="IPR045279">
    <property type="entry name" value="ARR-like"/>
</dbReference>
<dbReference type="InterPro" id="IPR011006">
    <property type="entry name" value="CheY-like_superfamily"/>
</dbReference>
<dbReference type="InterPro" id="IPR001789">
    <property type="entry name" value="Sig_transdc_resp-reg_receiver"/>
</dbReference>
<dbReference type="PANTHER" id="PTHR43874">
    <property type="entry name" value="TWO-COMPONENT RESPONSE REGULATOR"/>
    <property type="match status" value="1"/>
</dbReference>
<dbReference type="PANTHER" id="PTHR43874:SF33">
    <property type="entry name" value="TWO-COMPONENT RESPONSE REGULATOR ORR8"/>
    <property type="match status" value="1"/>
</dbReference>
<dbReference type="Pfam" id="PF00072">
    <property type="entry name" value="Response_reg"/>
    <property type="match status" value="1"/>
</dbReference>
<dbReference type="SMART" id="SM00448">
    <property type="entry name" value="REC"/>
    <property type="match status" value="1"/>
</dbReference>
<dbReference type="SUPFAM" id="SSF52172">
    <property type="entry name" value="CheY-like"/>
    <property type="match status" value="1"/>
</dbReference>
<dbReference type="PROSITE" id="PS50110">
    <property type="entry name" value="RESPONSE_REGULATORY"/>
    <property type="match status" value="1"/>
</dbReference>